<accession>B0Z570</accession>
<gene>
    <name evidence="1" type="primary">psbB</name>
</gene>
<sequence length="508" mass="56012">MGLPWYRVHTVVLNDPGRLLAVHIMHTALVAGWAGSMALYELAVFDPSDPVLDPMWRQGMFVIPFMTRLGITNSWGGWSITGGTVTNPGIWSYEGVAGSHILFSGLCFLAAIWHWVYWDLAIFSDERTGKPSLDLPKIFGIHLFLSGLACFGFGAFHVTGLYGPGIWVSDPYGLTGEVQPVNPAWGVEGFDPFVPGGIASHHIAAGTLGILAGLFHLSVRPPQRLYKGLRMGNIETVLSSSIAAVFFAAFVVAGTMWYGSATTPIELFGPTRYQWDQGYFQQEIYRRVGAGLAKNQSLSEAWSKIPEKLAFYDYIGNNPAKGGLFRAGSMDSGDGIAVGWLGHPIFRDKEGRELFVRRMPTFFETFPVVLVDGDGIVRADVPFRRAESKYSVEQVGVTIEFYGGELNGVSYSDPATVKKYARRAQLGEIFELDRATLKSDGVFRSSPRGWFTFGHASFALLFFFGHIWHGARTLFRDVFAGIDPDLDTQVEFGAFQKLGDPTTRRQAV</sequence>
<comment type="function">
    <text evidence="1">One of the components of the core complex of photosystem II (PSII). It binds chlorophyll and helps catalyze the primary light-induced photochemical processes of PSII. PSII is a light-driven water:plastoquinone oxidoreductase, using light energy to abstract electrons from H(2)O, generating O(2) and a proton gradient subsequently used for ATP formation.</text>
</comment>
<comment type="cofactor">
    <text evidence="1">Binds multiple chlorophylls. PSII binds additional chlorophylls, carotenoids and specific lipids.</text>
</comment>
<comment type="subunit">
    <text evidence="1">PSII is composed of 1 copy each of membrane proteins PsbA, PsbB, PsbC, PsbD, PsbE, PsbF, PsbH, PsbI, PsbJ, PsbK, PsbL, PsbM, PsbT, PsbX, PsbY, PsbZ, Psb30/Ycf12, at least 3 peripheral proteins of the oxygen-evolving complex and a large number of cofactors. It forms dimeric complexes.</text>
</comment>
<comment type="subcellular location">
    <subcellularLocation>
        <location evidence="1">Plastid</location>
        <location evidence="1">Chloroplast thylakoid membrane</location>
        <topology evidence="1">Multi-pass membrane protein</topology>
    </subcellularLocation>
</comment>
<comment type="similarity">
    <text evidence="1">Belongs to the PsbB/PsbC family. PsbB subfamily.</text>
</comment>
<feature type="chain" id="PRO_0000359848" description="Photosystem II CP47 reaction center protein">
    <location>
        <begin position="1"/>
        <end position="508"/>
    </location>
</feature>
<feature type="transmembrane region" description="Helical" evidence="1">
    <location>
        <begin position="21"/>
        <end position="36"/>
    </location>
</feature>
<feature type="transmembrane region" description="Helical" evidence="1">
    <location>
        <begin position="101"/>
        <end position="115"/>
    </location>
</feature>
<feature type="transmembrane region" description="Helical" evidence="1">
    <location>
        <begin position="140"/>
        <end position="156"/>
    </location>
</feature>
<feature type="transmembrane region" description="Helical" evidence="1">
    <location>
        <begin position="203"/>
        <end position="218"/>
    </location>
</feature>
<feature type="transmembrane region" description="Helical" evidence="1">
    <location>
        <begin position="237"/>
        <end position="252"/>
    </location>
</feature>
<feature type="transmembrane region" description="Helical" evidence="1">
    <location>
        <begin position="457"/>
        <end position="472"/>
    </location>
</feature>
<protein>
    <recommendedName>
        <fullName evidence="1">Photosystem II CP47 reaction center protein</fullName>
    </recommendedName>
    <alternativeName>
        <fullName evidence="1">PSII 47 kDa protein</fullName>
    </alternativeName>
    <alternativeName>
        <fullName evidence="1">Protein CP-47</fullName>
    </alternativeName>
</protein>
<keyword id="KW-0148">Chlorophyll</keyword>
<keyword id="KW-0150">Chloroplast</keyword>
<keyword id="KW-0157">Chromophore</keyword>
<keyword id="KW-0472">Membrane</keyword>
<keyword id="KW-0602">Photosynthesis</keyword>
<keyword id="KW-0604">Photosystem II</keyword>
<keyword id="KW-0934">Plastid</keyword>
<keyword id="KW-0793">Thylakoid</keyword>
<keyword id="KW-0812">Transmembrane</keyword>
<keyword id="KW-1133">Transmembrane helix</keyword>
<proteinExistence type="inferred from homology"/>
<geneLocation type="chloroplast"/>
<dbReference type="EMBL" id="EU262890">
    <property type="protein sequence ID" value="ABX10063.1"/>
    <property type="molecule type" value="Genomic_DNA"/>
</dbReference>
<dbReference type="RefSeq" id="YP_001687309.1">
    <property type="nucleotide sequence ID" value="NC_010360.2"/>
</dbReference>
<dbReference type="SMR" id="B0Z570"/>
<dbReference type="GeneID" id="5955338"/>
<dbReference type="GO" id="GO:0009535">
    <property type="term" value="C:chloroplast thylakoid membrane"/>
    <property type="evidence" value="ECO:0007669"/>
    <property type="project" value="UniProtKB-SubCell"/>
</dbReference>
<dbReference type="GO" id="GO:0009523">
    <property type="term" value="C:photosystem II"/>
    <property type="evidence" value="ECO:0007669"/>
    <property type="project" value="UniProtKB-KW"/>
</dbReference>
<dbReference type="GO" id="GO:0016168">
    <property type="term" value="F:chlorophyll binding"/>
    <property type="evidence" value="ECO:0007669"/>
    <property type="project" value="UniProtKB-UniRule"/>
</dbReference>
<dbReference type="GO" id="GO:0045156">
    <property type="term" value="F:electron transporter, transferring electrons within the cyclic electron transport pathway of photosynthesis activity"/>
    <property type="evidence" value="ECO:0007669"/>
    <property type="project" value="InterPro"/>
</dbReference>
<dbReference type="GO" id="GO:0009772">
    <property type="term" value="P:photosynthetic electron transport in photosystem II"/>
    <property type="evidence" value="ECO:0007669"/>
    <property type="project" value="InterPro"/>
</dbReference>
<dbReference type="FunFam" id="3.10.680.10:FF:000001">
    <property type="entry name" value="Photosystem II CP47 reaction center protein"/>
    <property type="match status" value="1"/>
</dbReference>
<dbReference type="Gene3D" id="3.10.680.10">
    <property type="entry name" value="Photosystem II CP47 reaction center protein"/>
    <property type="match status" value="1"/>
</dbReference>
<dbReference type="HAMAP" id="MF_01495">
    <property type="entry name" value="PSII_PsbB_CP47"/>
    <property type="match status" value="1"/>
</dbReference>
<dbReference type="InterPro" id="IPR000932">
    <property type="entry name" value="PS_antenna-like"/>
</dbReference>
<dbReference type="InterPro" id="IPR036001">
    <property type="entry name" value="PS_II_antenna-like_sf"/>
</dbReference>
<dbReference type="InterPro" id="IPR017486">
    <property type="entry name" value="PSII_PsbB"/>
</dbReference>
<dbReference type="NCBIfam" id="TIGR03039">
    <property type="entry name" value="PS_II_CP47"/>
    <property type="match status" value="1"/>
</dbReference>
<dbReference type="PANTHER" id="PTHR33180">
    <property type="entry name" value="PHOTOSYSTEM II CP43 REACTION CENTER PROTEIN"/>
    <property type="match status" value="1"/>
</dbReference>
<dbReference type="PANTHER" id="PTHR33180:SF35">
    <property type="entry name" value="PHOTOSYSTEM II CP47 REACTION CENTER PROTEIN"/>
    <property type="match status" value="1"/>
</dbReference>
<dbReference type="Pfam" id="PF00421">
    <property type="entry name" value="PSII"/>
    <property type="match status" value="1"/>
</dbReference>
<dbReference type="SUPFAM" id="SSF161077">
    <property type="entry name" value="Photosystem II antenna protein-like"/>
    <property type="match status" value="1"/>
</dbReference>
<reference key="1">
    <citation type="journal article" date="2008" name="Nucleic Acids Res.">
        <title>The complete nucleotide sequences of the five genetically distinct plastid genomes of Oenothera, subsection Oenothera: I. Sequence evaluation and plastome evolution.</title>
        <authorList>
            <person name="Greiner S."/>
            <person name="Wang X."/>
            <person name="Rauwolf U."/>
            <person name="Silber M.V."/>
            <person name="Mayer K."/>
            <person name="Meurer J."/>
            <person name="Haberer G."/>
            <person name="Herrmann R.G."/>
        </authorList>
    </citation>
    <scope>NUCLEOTIDE SEQUENCE [LARGE SCALE GENOMIC DNA]</scope>
    <source>
        <strain>cv. Rr-lamarckiana Sweden</strain>
    </source>
</reference>
<name>PSBB_OENGL</name>
<organism>
    <name type="scientific">Oenothera glazioviana</name>
    <name type="common">Large-flowered evening primrose</name>
    <name type="synonym">Oenothera erythrosepala</name>
    <dbReference type="NCBI Taxonomy" id="482428"/>
    <lineage>
        <taxon>Eukaryota</taxon>
        <taxon>Viridiplantae</taxon>
        <taxon>Streptophyta</taxon>
        <taxon>Embryophyta</taxon>
        <taxon>Tracheophyta</taxon>
        <taxon>Spermatophyta</taxon>
        <taxon>Magnoliopsida</taxon>
        <taxon>eudicotyledons</taxon>
        <taxon>Gunneridae</taxon>
        <taxon>Pentapetalae</taxon>
        <taxon>rosids</taxon>
        <taxon>malvids</taxon>
        <taxon>Myrtales</taxon>
        <taxon>Onagraceae</taxon>
        <taxon>Onagroideae</taxon>
        <taxon>Onagreae</taxon>
        <taxon>Oenothera</taxon>
    </lineage>
</organism>
<evidence type="ECO:0000255" key="1">
    <source>
        <dbReference type="HAMAP-Rule" id="MF_01495"/>
    </source>
</evidence>